<accession>A9R907</accession>
<comment type="function">
    <text evidence="1">This is one of the proteins that bind and probably mediate the attachment of the 5S RNA into the large ribosomal subunit, where it forms part of the central protuberance. In the 70S ribosome it contacts protein S13 of the 30S subunit (bridge B1b), connecting the 2 subunits; this bridge is implicated in subunit movement. Contacts the P site tRNA; the 5S rRNA and some of its associated proteins might help stabilize positioning of ribosome-bound tRNAs.</text>
</comment>
<comment type="subunit">
    <text evidence="1">Part of the 50S ribosomal subunit; part of the 5S rRNA/L5/L18/L25 subcomplex. Contacts the 5S rRNA and the P site tRNA. Forms a bridge to the 30S subunit in the 70S ribosome.</text>
</comment>
<comment type="similarity">
    <text evidence="1">Belongs to the universal ribosomal protein uL5 family.</text>
</comment>
<protein>
    <recommendedName>
        <fullName evidence="1">Large ribosomal subunit protein uL5</fullName>
    </recommendedName>
    <alternativeName>
        <fullName evidence="2">50S ribosomal protein L5</fullName>
    </alternativeName>
</protein>
<proteinExistence type="inferred from homology"/>
<sequence>MAKLHDYYKDEVVKQLMSQFGYDSVMQVPRVEKITLNMGVGEAIADKKLLDNAAADLAAISGQKPFITKARKSVAGFKIRQGYPIGCKVTLRGERMWEFFERLITIAVPRIRDFRGLSAKSFDGRGNYSMGVREQIIFPEIDYDKVDRVRGLDITITTTAKSDDEGRALLAAFKFPFRK</sequence>
<keyword id="KW-0687">Ribonucleoprotein</keyword>
<keyword id="KW-0689">Ribosomal protein</keyword>
<keyword id="KW-0694">RNA-binding</keyword>
<keyword id="KW-0699">rRNA-binding</keyword>
<keyword id="KW-0820">tRNA-binding</keyword>
<name>RL5_YERPG</name>
<evidence type="ECO:0000255" key="1">
    <source>
        <dbReference type="HAMAP-Rule" id="MF_01333"/>
    </source>
</evidence>
<evidence type="ECO:0000305" key="2"/>
<reference key="1">
    <citation type="journal article" date="2010" name="J. Bacteriol.">
        <title>Genome sequence of the deep-rooted Yersinia pestis strain Angola reveals new insights into the evolution and pangenome of the plague bacterium.</title>
        <authorList>
            <person name="Eppinger M."/>
            <person name="Worsham P.L."/>
            <person name="Nikolich M.P."/>
            <person name="Riley D.R."/>
            <person name="Sebastian Y."/>
            <person name="Mou S."/>
            <person name="Achtman M."/>
            <person name="Lindler L.E."/>
            <person name="Ravel J."/>
        </authorList>
    </citation>
    <scope>NUCLEOTIDE SEQUENCE [LARGE SCALE GENOMIC DNA]</scope>
    <source>
        <strain>Angola</strain>
    </source>
</reference>
<dbReference type="EMBL" id="CP000901">
    <property type="protein sequence ID" value="ABX86822.1"/>
    <property type="molecule type" value="Genomic_DNA"/>
</dbReference>
<dbReference type="RefSeq" id="WP_002213329.1">
    <property type="nucleotide sequence ID" value="NZ_CP009935.1"/>
</dbReference>
<dbReference type="SMR" id="A9R907"/>
<dbReference type="GeneID" id="96663184"/>
<dbReference type="KEGG" id="ypg:YpAngola_A0595"/>
<dbReference type="PATRIC" id="fig|349746.12.peg.1545"/>
<dbReference type="GO" id="GO:1990904">
    <property type="term" value="C:ribonucleoprotein complex"/>
    <property type="evidence" value="ECO:0007669"/>
    <property type="project" value="UniProtKB-KW"/>
</dbReference>
<dbReference type="GO" id="GO:0005840">
    <property type="term" value="C:ribosome"/>
    <property type="evidence" value="ECO:0007669"/>
    <property type="project" value="UniProtKB-KW"/>
</dbReference>
<dbReference type="GO" id="GO:0019843">
    <property type="term" value="F:rRNA binding"/>
    <property type="evidence" value="ECO:0007669"/>
    <property type="project" value="UniProtKB-UniRule"/>
</dbReference>
<dbReference type="GO" id="GO:0003735">
    <property type="term" value="F:structural constituent of ribosome"/>
    <property type="evidence" value="ECO:0007669"/>
    <property type="project" value="InterPro"/>
</dbReference>
<dbReference type="GO" id="GO:0000049">
    <property type="term" value="F:tRNA binding"/>
    <property type="evidence" value="ECO:0007669"/>
    <property type="project" value="UniProtKB-UniRule"/>
</dbReference>
<dbReference type="GO" id="GO:0006412">
    <property type="term" value="P:translation"/>
    <property type="evidence" value="ECO:0007669"/>
    <property type="project" value="UniProtKB-UniRule"/>
</dbReference>
<dbReference type="FunFam" id="3.30.1440.10:FF:000001">
    <property type="entry name" value="50S ribosomal protein L5"/>
    <property type="match status" value="1"/>
</dbReference>
<dbReference type="Gene3D" id="3.30.1440.10">
    <property type="match status" value="1"/>
</dbReference>
<dbReference type="HAMAP" id="MF_01333_B">
    <property type="entry name" value="Ribosomal_uL5_B"/>
    <property type="match status" value="1"/>
</dbReference>
<dbReference type="InterPro" id="IPR002132">
    <property type="entry name" value="Ribosomal_uL5"/>
</dbReference>
<dbReference type="InterPro" id="IPR020930">
    <property type="entry name" value="Ribosomal_uL5_bac-type"/>
</dbReference>
<dbReference type="InterPro" id="IPR031309">
    <property type="entry name" value="Ribosomal_uL5_C"/>
</dbReference>
<dbReference type="InterPro" id="IPR022803">
    <property type="entry name" value="Ribosomal_uL5_dom_sf"/>
</dbReference>
<dbReference type="InterPro" id="IPR031310">
    <property type="entry name" value="Ribosomal_uL5_N"/>
</dbReference>
<dbReference type="NCBIfam" id="NF000585">
    <property type="entry name" value="PRK00010.1"/>
    <property type="match status" value="1"/>
</dbReference>
<dbReference type="PANTHER" id="PTHR11994">
    <property type="entry name" value="60S RIBOSOMAL PROTEIN L11-RELATED"/>
    <property type="match status" value="1"/>
</dbReference>
<dbReference type="Pfam" id="PF00281">
    <property type="entry name" value="Ribosomal_L5"/>
    <property type="match status" value="1"/>
</dbReference>
<dbReference type="Pfam" id="PF00673">
    <property type="entry name" value="Ribosomal_L5_C"/>
    <property type="match status" value="1"/>
</dbReference>
<dbReference type="PIRSF" id="PIRSF002161">
    <property type="entry name" value="Ribosomal_L5"/>
    <property type="match status" value="1"/>
</dbReference>
<dbReference type="SUPFAM" id="SSF55282">
    <property type="entry name" value="RL5-like"/>
    <property type="match status" value="1"/>
</dbReference>
<organism>
    <name type="scientific">Yersinia pestis bv. Antiqua (strain Angola)</name>
    <dbReference type="NCBI Taxonomy" id="349746"/>
    <lineage>
        <taxon>Bacteria</taxon>
        <taxon>Pseudomonadati</taxon>
        <taxon>Pseudomonadota</taxon>
        <taxon>Gammaproteobacteria</taxon>
        <taxon>Enterobacterales</taxon>
        <taxon>Yersiniaceae</taxon>
        <taxon>Yersinia</taxon>
    </lineage>
</organism>
<feature type="chain" id="PRO_1000142479" description="Large ribosomal subunit protein uL5">
    <location>
        <begin position="1"/>
        <end position="179"/>
    </location>
</feature>
<gene>
    <name evidence="1" type="primary">rplE</name>
    <name type="ordered locus">YpAngola_A0595</name>
</gene>